<name>LIPA_FRAAA</name>
<gene>
    <name evidence="1" type="primary">lipA</name>
    <name type="ordered locus">FRAAL5157</name>
</gene>
<proteinExistence type="inferred from homology"/>
<keyword id="KW-0004">4Fe-4S</keyword>
<keyword id="KW-0963">Cytoplasm</keyword>
<keyword id="KW-0408">Iron</keyword>
<keyword id="KW-0411">Iron-sulfur</keyword>
<keyword id="KW-0479">Metal-binding</keyword>
<keyword id="KW-1185">Reference proteome</keyword>
<keyword id="KW-0949">S-adenosyl-L-methionine</keyword>
<keyword id="KW-0808">Transferase</keyword>
<sequence length="328" mass="36363">MSAVAPEGRPLLRLEARNAQTPIERKPPWIRTRMRTGPEYSDVKGLVRAAGLHTVCEEAGCPNIYECWEDREATFLIGGDVCTRRCDFCQIDSGRPTPLDRDEPRRVAESVRTMGLRYATVTGVARDDLADGGSWLYGETVRQIHALSAGTGVEVLIPDFGGRADQLDEVFGAAPEVLAHNLETVPRIFKRIRPAFRYERSLDVLRQARAAGLVTKSNLILGLGETAEEIHAAMRDLHAAGCELLTVTQYLRPTPRHHPVERWVRPEEFLDWERVGAELGFSGVMSGPLVRSSYRAGRLYQQAITARGEGHTAASDLPKSVLETSHTQ</sequence>
<comment type="function">
    <text evidence="1">Catalyzes the radical-mediated insertion of two sulfur atoms into the C-6 and C-8 positions of the octanoyl moiety bound to the lipoyl domains of lipoate-dependent enzymes, thereby converting the octanoylated domains into lipoylated derivatives.</text>
</comment>
<comment type="catalytic activity">
    <reaction evidence="1">
        <text>[[Fe-S] cluster scaffold protein carrying a second [4Fe-4S](2+) cluster] + N(6)-octanoyl-L-lysyl-[protein] + 2 oxidized [2Fe-2S]-[ferredoxin] + 2 S-adenosyl-L-methionine + 4 H(+) = [[Fe-S] cluster scaffold protein] + N(6)-[(R)-dihydrolipoyl]-L-lysyl-[protein] + 4 Fe(3+) + 2 hydrogen sulfide + 2 5'-deoxyadenosine + 2 L-methionine + 2 reduced [2Fe-2S]-[ferredoxin]</text>
        <dbReference type="Rhea" id="RHEA:16585"/>
        <dbReference type="Rhea" id="RHEA-COMP:9928"/>
        <dbReference type="Rhea" id="RHEA-COMP:10000"/>
        <dbReference type="Rhea" id="RHEA-COMP:10001"/>
        <dbReference type="Rhea" id="RHEA-COMP:10475"/>
        <dbReference type="Rhea" id="RHEA-COMP:14568"/>
        <dbReference type="Rhea" id="RHEA-COMP:14569"/>
        <dbReference type="ChEBI" id="CHEBI:15378"/>
        <dbReference type="ChEBI" id="CHEBI:17319"/>
        <dbReference type="ChEBI" id="CHEBI:29034"/>
        <dbReference type="ChEBI" id="CHEBI:29919"/>
        <dbReference type="ChEBI" id="CHEBI:33722"/>
        <dbReference type="ChEBI" id="CHEBI:33737"/>
        <dbReference type="ChEBI" id="CHEBI:33738"/>
        <dbReference type="ChEBI" id="CHEBI:57844"/>
        <dbReference type="ChEBI" id="CHEBI:59789"/>
        <dbReference type="ChEBI" id="CHEBI:78809"/>
        <dbReference type="ChEBI" id="CHEBI:83100"/>
        <dbReference type="EC" id="2.8.1.8"/>
    </reaction>
</comment>
<comment type="cofactor">
    <cofactor evidence="1">
        <name>[4Fe-4S] cluster</name>
        <dbReference type="ChEBI" id="CHEBI:49883"/>
    </cofactor>
    <text evidence="1">Binds 2 [4Fe-4S] clusters per subunit. One cluster is coordinated with 3 cysteines and an exchangeable S-adenosyl-L-methionine.</text>
</comment>
<comment type="pathway">
    <text evidence="1">Protein modification; protein lipoylation via endogenous pathway; protein N(6)-(lipoyl)lysine from octanoyl-[acyl-carrier-protein]: step 2/2.</text>
</comment>
<comment type="subcellular location">
    <subcellularLocation>
        <location evidence="1">Cytoplasm</location>
    </subcellularLocation>
</comment>
<comment type="similarity">
    <text evidence="1">Belongs to the radical SAM superfamily. Lipoyl synthase family.</text>
</comment>
<evidence type="ECO:0000255" key="1">
    <source>
        <dbReference type="HAMAP-Rule" id="MF_00206"/>
    </source>
</evidence>
<evidence type="ECO:0000255" key="2">
    <source>
        <dbReference type="PROSITE-ProRule" id="PRU01266"/>
    </source>
</evidence>
<feature type="chain" id="PRO_1000012223" description="Lipoyl synthase">
    <location>
        <begin position="1"/>
        <end position="328"/>
    </location>
</feature>
<feature type="domain" description="Radical SAM core" evidence="2">
    <location>
        <begin position="68"/>
        <end position="282"/>
    </location>
</feature>
<feature type="binding site" evidence="1">
    <location>
        <position position="56"/>
    </location>
    <ligand>
        <name>[4Fe-4S] cluster</name>
        <dbReference type="ChEBI" id="CHEBI:49883"/>
        <label>1</label>
    </ligand>
</feature>
<feature type="binding site" evidence="1">
    <location>
        <position position="61"/>
    </location>
    <ligand>
        <name>[4Fe-4S] cluster</name>
        <dbReference type="ChEBI" id="CHEBI:49883"/>
        <label>1</label>
    </ligand>
</feature>
<feature type="binding site" evidence="1">
    <location>
        <position position="67"/>
    </location>
    <ligand>
        <name>[4Fe-4S] cluster</name>
        <dbReference type="ChEBI" id="CHEBI:49883"/>
        <label>1</label>
    </ligand>
</feature>
<feature type="binding site" evidence="1">
    <location>
        <position position="82"/>
    </location>
    <ligand>
        <name>[4Fe-4S] cluster</name>
        <dbReference type="ChEBI" id="CHEBI:49883"/>
        <label>2</label>
        <note>4Fe-4S-S-AdoMet</note>
    </ligand>
</feature>
<feature type="binding site" evidence="1">
    <location>
        <position position="86"/>
    </location>
    <ligand>
        <name>[4Fe-4S] cluster</name>
        <dbReference type="ChEBI" id="CHEBI:49883"/>
        <label>2</label>
        <note>4Fe-4S-S-AdoMet</note>
    </ligand>
</feature>
<feature type="binding site" evidence="1">
    <location>
        <position position="89"/>
    </location>
    <ligand>
        <name>[4Fe-4S] cluster</name>
        <dbReference type="ChEBI" id="CHEBI:49883"/>
        <label>2</label>
        <note>4Fe-4S-S-AdoMet</note>
    </ligand>
</feature>
<feature type="binding site" evidence="1">
    <location>
        <position position="293"/>
    </location>
    <ligand>
        <name>[4Fe-4S] cluster</name>
        <dbReference type="ChEBI" id="CHEBI:49883"/>
        <label>1</label>
    </ligand>
</feature>
<organism>
    <name type="scientific">Frankia alni (strain DSM 45986 / CECT 9034 / ACN14a)</name>
    <dbReference type="NCBI Taxonomy" id="326424"/>
    <lineage>
        <taxon>Bacteria</taxon>
        <taxon>Bacillati</taxon>
        <taxon>Actinomycetota</taxon>
        <taxon>Actinomycetes</taxon>
        <taxon>Frankiales</taxon>
        <taxon>Frankiaceae</taxon>
        <taxon>Frankia</taxon>
    </lineage>
</organism>
<accession>Q0RFE8</accession>
<protein>
    <recommendedName>
        <fullName evidence="1">Lipoyl synthase</fullName>
        <ecNumber evidence="1">2.8.1.8</ecNumber>
    </recommendedName>
    <alternativeName>
        <fullName evidence="1">Lip-syn</fullName>
        <shortName evidence="1">LS</shortName>
    </alternativeName>
    <alternativeName>
        <fullName evidence="1">Lipoate synthase</fullName>
    </alternativeName>
    <alternativeName>
        <fullName evidence="1">Lipoic acid synthase</fullName>
    </alternativeName>
    <alternativeName>
        <fullName evidence="1">Sulfur insertion protein LipA</fullName>
    </alternativeName>
</protein>
<dbReference type="EC" id="2.8.1.8" evidence="1"/>
<dbReference type="EMBL" id="CT573213">
    <property type="protein sequence ID" value="CAJ63797.1"/>
    <property type="molecule type" value="Genomic_DNA"/>
</dbReference>
<dbReference type="RefSeq" id="WP_011606261.1">
    <property type="nucleotide sequence ID" value="NC_008278.1"/>
</dbReference>
<dbReference type="SMR" id="Q0RFE8"/>
<dbReference type="STRING" id="326424.FRAAL5157"/>
<dbReference type="KEGG" id="fal:FRAAL5157"/>
<dbReference type="eggNOG" id="COG0320">
    <property type="taxonomic scope" value="Bacteria"/>
</dbReference>
<dbReference type="HOGENOM" id="CLU_033144_2_1_11"/>
<dbReference type="OrthoDB" id="9787898at2"/>
<dbReference type="UniPathway" id="UPA00538">
    <property type="reaction ID" value="UER00593"/>
</dbReference>
<dbReference type="Proteomes" id="UP000000657">
    <property type="component" value="Chromosome"/>
</dbReference>
<dbReference type="GO" id="GO:0005737">
    <property type="term" value="C:cytoplasm"/>
    <property type="evidence" value="ECO:0007669"/>
    <property type="project" value="UniProtKB-SubCell"/>
</dbReference>
<dbReference type="GO" id="GO:0051539">
    <property type="term" value="F:4 iron, 4 sulfur cluster binding"/>
    <property type="evidence" value="ECO:0007669"/>
    <property type="project" value="UniProtKB-UniRule"/>
</dbReference>
<dbReference type="GO" id="GO:0016992">
    <property type="term" value="F:lipoate synthase activity"/>
    <property type="evidence" value="ECO:0007669"/>
    <property type="project" value="UniProtKB-UniRule"/>
</dbReference>
<dbReference type="GO" id="GO:0046872">
    <property type="term" value="F:metal ion binding"/>
    <property type="evidence" value="ECO:0007669"/>
    <property type="project" value="UniProtKB-KW"/>
</dbReference>
<dbReference type="CDD" id="cd01335">
    <property type="entry name" value="Radical_SAM"/>
    <property type="match status" value="1"/>
</dbReference>
<dbReference type="Gene3D" id="3.20.20.70">
    <property type="entry name" value="Aldolase class I"/>
    <property type="match status" value="1"/>
</dbReference>
<dbReference type="HAMAP" id="MF_00206">
    <property type="entry name" value="Lipoyl_synth"/>
    <property type="match status" value="1"/>
</dbReference>
<dbReference type="InterPro" id="IPR013785">
    <property type="entry name" value="Aldolase_TIM"/>
</dbReference>
<dbReference type="InterPro" id="IPR006638">
    <property type="entry name" value="Elp3/MiaA/NifB-like_rSAM"/>
</dbReference>
<dbReference type="InterPro" id="IPR031691">
    <property type="entry name" value="LIAS_N"/>
</dbReference>
<dbReference type="InterPro" id="IPR003698">
    <property type="entry name" value="Lipoyl_synth"/>
</dbReference>
<dbReference type="InterPro" id="IPR007197">
    <property type="entry name" value="rSAM"/>
</dbReference>
<dbReference type="NCBIfam" id="TIGR00510">
    <property type="entry name" value="lipA"/>
    <property type="match status" value="1"/>
</dbReference>
<dbReference type="NCBIfam" id="NF004019">
    <property type="entry name" value="PRK05481.1"/>
    <property type="match status" value="1"/>
</dbReference>
<dbReference type="NCBIfam" id="NF009544">
    <property type="entry name" value="PRK12928.1"/>
    <property type="match status" value="1"/>
</dbReference>
<dbReference type="PANTHER" id="PTHR10949">
    <property type="entry name" value="LIPOYL SYNTHASE"/>
    <property type="match status" value="1"/>
</dbReference>
<dbReference type="PANTHER" id="PTHR10949:SF0">
    <property type="entry name" value="LIPOYL SYNTHASE, MITOCHONDRIAL"/>
    <property type="match status" value="1"/>
</dbReference>
<dbReference type="Pfam" id="PF16881">
    <property type="entry name" value="LIAS_N"/>
    <property type="match status" value="1"/>
</dbReference>
<dbReference type="Pfam" id="PF04055">
    <property type="entry name" value="Radical_SAM"/>
    <property type="match status" value="1"/>
</dbReference>
<dbReference type="PIRSF" id="PIRSF005963">
    <property type="entry name" value="Lipoyl_synth"/>
    <property type="match status" value="1"/>
</dbReference>
<dbReference type="SFLD" id="SFLDF00271">
    <property type="entry name" value="lipoyl_synthase"/>
    <property type="match status" value="1"/>
</dbReference>
<dbReference type="SFLD" id="SFLDG01058">
    <property type="entry name" value="lipoyl_synthase_like"/>
    <property type="match status" value="1"/>
</dbReference>
<dbReference type="SMART" id="SM00729">
    <property type="entry name" value="Elp3"/>
    <property type="match status" value="1"/>
</dbReference>
<dbReference type="SUPFAM" id="SSF102114">
    <property type="entry name" value="Radical SAM enzymes"/>
    <property type="match status" value="1"/>
</dbReference>
<dbReference type="PROSITE" id="PS51918">
    <property type="entry name" value="RADICAL_SAM"/>
    <property type="match status" value="1"/>
</dbReference>
<reference key="1">
    <citation type="journal article" date="2007" name="Genome Res.">
        <title>Genome characteristics of facultatively symbiotic Frankia sp. strains reflect host range and host plant biogeography.</title>
        <authorList>
            <person name="Normand P."/>
            <person name="Lapierre P."/>
            <person name="Tisa L.S."/>
            <person name="Gogarten J.P."/>
            <person name="Alloisio N."/>
            <person name="Bagnarol E."/>
            <person name="Bassi C.A."/>
            <person name="Berry A.M."/>
            <person name="Bickhart D.M."/>
            <person name="Choisne N."/>
            <person name="Couloux A."/>
            <person name="Cournoyer B."/>
            <person name="Cruveiller S."/>
            <person name="Daubin V."/>
            <person name="Demange N."/>
            <person name="Francino M.P."/>
            <person name="Goltsman E."/>
            <person name="Huang Y."/>
            <person name="Kopp O.R."/>
            <person name="Labarre L."/>
            <person name="Lapidus A."/>
            <person name="Lavire C."/>
            <person name="Marechal J."/>
            <person name="Martinez M."/>
            <person name="Mastronunzio J.E."/>
            <person name="Mullin B.C."/>
            <person name="Niemann J."/>
            <person name="Pujic P."/>
            <person name="Rawnsley T."/>
            <person name="Rouy Z."/>
            <person name="Schenowitz C."/>
            <person name="Sellstedt A."/>
            <person name="Tavares F."/>
            <person name="Tomkins J.P."/>
            <person name="Vallenet D."/>
            <person name="Valverde C."/>
            <person name="Wall L.G."/>
            <person name="Wang Y."/>
            <person name="Medigue C."/>
            <person name="Benson D.R."/>
        </authorList>
    </citation>
    <scope>NUCLEOTIDE SEQUENCE [LARGE SCALE GENOMIC DNA]</scope>
    <source>
        <strain>DSM 45986 / CECT 9034 / ACN14a</strain>
    </source>
</reference>